<dbReference type="EMBL" id="BC113227">
    <property type="protein sequence ID" value="AAI13228.1"/>
    <property type="molecule type" value="mRNA"/>
</dbReference>
<dbReference type="RefSeq" id="NP_777184.2">
    <property type="nucleotide sequence ID" value="NM_174759.2"/>
</dbReference>
<dbReference type="RefSeq" id="XP_024854114.1">
    <property type="nucleotide sequence ID" value="XM_024998346.2"/>
</dbReference>
<dbReference type="SMR" id="Q2HJA9"/>
<dbReference type="FunCoup" id="Q2HJA9">
    <property type="interactions" value="3960"/>
</dbReference>
<dbReference type="STRING" id="9913.ENSBTAP00000040945"/>
<dbReference type="PaxDb" id="9913-ENSBTAP00000040945"/>
<dbReference type="GeneID" id="286773"/>
<dbReference type="KEGG" id="bta:286773"/>
<dbReference type="CTD" id="5082"/>
<dbReference type="VEuPathDB" id="HostDB:ENSBTAG00000030675"/>
<dbReference type="eggNOG" id="KOG3171">
    <property type="taxonomic scope" value="Eukaryota"/>
</dbReference>
<dbReference type="HOGENOM" id="CLU_085598_0_0_1"/>
<dbReference type="InParanoid" id="Q2HJA9"/>
<dbReference type="OMA" id="GIIEMMP"/>
<dbReference type="OrthoDB" id="70588at2759"/>
<dbReference type="TreeFam" id="TF315179"/>
<dbReference type="Reactome" id="R-BTA-6814122">
    <property type="pathway name" value="Cooperation of PDCL (PhLP1) and TRiC/CCT in G-protein beta folding"/>
</dbReference>
<dbReference type="Proteomes" id="UP000009136">
    <property type="component" value="Chromosome 11"/>
</dbReference>
<dbReference type="Bgee" id="ENSBTAG00000030675">
    <property type="expression patterns" value="Expressed in neutrophil and 105 other cell types or tissues"/>
</dbReference>
<dbReference type="GO" id="GO:0005929">
    <property type="term" value="C:cilium"/>
    <property type="evidence" value="ECO:0007669"/>
    <property type="project" value="UniProtKB-SubCell"/>
</dbReference>
<dbReference type="GO" id="GO:0005737">
    <property type="term" value="C:cytoplasm"/>
    <property type="evidence" value="ECO:0000318"/>
    <property type="project" value="GO_Central"/>
</dbReference>
<dbReference type="GO" id="GO:0030030">
    <property type="term" value="P:cell projection organization"/>
    <property type="evidence" value="ECO:0007669"/>
    <property type="project" value="UniProtKB-KW"/>
</dbReference>
<dbReference type="GO" id="GO:1902605">
    <property type="term" value="P:heterotrimeric G-protein complex assembly"/>
    <property type="evidence" value="ECO:0000318"/>
    <property type="project" value="GO_Central"/>
</dbReference>
<dbReference type="GO" id="GO:0045880">
    <property type="term" value="P:positive regulation of smoothened signaling pathway"/>
    <property type="evidence" value="ECO:0000250"/>
    <property type="project" value="UniProtKB"/>
</dbReference>
<dbReference type="GO" id="GO:0008277">
    <property type="term" value="P:regulation of G protein-coupled receptor signaling pathway"/>
    <property type="evidence" value="ECO:0007669"/>
    <property type="project" value="InterPro"/>
</dbReference>
<dbReference type="GO" id="GO:0007601">
    <property type="term" value="P:visual perception"/>
    <property type="evidence" value="ECO:0007669"/>
    <property type="project" value="UniProtKB-KW"/>
</dbReference>
<dbReference type="CDD" id="cd02987">
    <property type="entry name" value="Phd_like_Phd"/>
    <property type="match status" value="1"/>
</dbReference>
<dbReference type="FunFam" id="3.40.30.10:FF:000072">
    <property type="entry name" value="Phosducin like"/>
    <property type="match status" value="1"/>
</dbReference>
<dbReference type="FunFam" id="1.10.168.10:FF:000001">
    <property type="entry name" value="phosducin-like protein"/>
    <property type="match status" value="1"/>
</dbReference>
<dbReference type="Gene3D" id="3.40.30.10">
    <property type="entry name" value="Glutaredoxin"/>
    <property type="match status" value="1"/>
</dbReference>
<dbReference type="Gene3D" id="1.10.168.10">
    <property type="entry name" value="Phosducin, domain 2"/>
    <property type="match status" value="1"/>
</dbReference>
<dbReference type="InterPro" id="IPR001200">
    <property type="entry name" value="Phosducin"/>
</dbReference>
<dbReference type="InterPro" id="IPR051499">
    <property type="entry name" value="Phosducin-like_reg"/>
</dbReference>
<dbReference type="InterPro" id="IPR023196">
    <property type="entry name" value="Phosducin_N_dom_sf"/>
</dbReference>
<dbReference type="InterPro" id="IPR024253">
    <property type="entry name" value="Phosducin_thioredoxin-like_dom"/>
</dbReference>
<dbReference type="InterPro" id="IPR036249">
    <property type="entry name" value="Thioredoxin-like_sf"/>
</dbReference>
<dbReference type="PANTHER" id="PTHR46052">
    <property type="entry name" value="PHOSDUCIN-LIKE PROTEIN"/>
    <property type="match status" value="1"/>
</dbReference>
<dbReference type="PANTHER" id="PTHR46052:SF4">
    <property type="entry name" value="PHOSDUCIN-LIKE PROTEIN"/>
    <property type="match status" value="1"/>
</dbReference>
<dbReference type="Pfam" id="PF02114">
    <property type="entry name" value="Phosducin"/>
    <property type="match status" value="1"/>
</dbReference>
<dbReference type="PRINTS" id="PR00677">
    <property type="entry name" value="PHOSDUCIN"/>
</dbReference>
<dbReference type="SUPFAM" id="SSF52833">
    <property type="entry name" value="Thioredoxin-like"/>
    <property type="match status" value="1"/>
</dbReference>
<proteinExistence type="evidence at transcript level"/>
<comment type="function">
    <text evidence="4">Functions as a co-chaperone for CCT in the assembly of heterotrimeric G protein complexes, facilitates the assembly of both Gbeta-Ggamma and RGS-Gbeta5 heterodimers. Also acts as a positive regulator of hedgehog signaling and regulates ciliary function.</text>
</comment>
<comment type="subunit">
    <text evidence="1">Forms a complex with the beta and gamma subunits of the GTP-binding protein, transducin. Interacts with the CCT chaperonin complex (By similarity).</text>
</comment>
<comment type="subcellular location">
    <subcellularLocation>
        <location evidence="4">Cell projection</location>
        <location evidence="4">Cilium</location>
    </subcellularLocation>
</comment>
<comment type="similarity">
    <text evidence="7">Belongs to the phosducin family.</text>
</comment>
<protein>
    <recommendedName>
        <fullName>Phosducin-like protein</fullName>
        <shortName>PHLP</shortName>
    </recommendedName>
</protein>
<evidence type="ECO:0000250" key="1"/>
<evidence type="ECO:0000250" key="2">
    <source>
        <dbReference type="UniProtKB" id="Q13371"/>
    </source>
</evidence>
<evidence type="ECO:0000250" key="3">
    <source>
        <dbReference type="UniProtKB" id="Q63737"/>
    </source>
</evidence>
<evidence type="ECO:0000250" key="4">
    <source>
        <dbReference type="UniProtKB" id="Q9DBX2"/>
    </source>
</evidence>
<evidence type="ECO:0000255" key="5"/>
<evidence type="ECO:0000256" key="6">
    <source>
        <dbReference type="SAM" id="MobiDB-lite"/>
    </source>
</evidence>
<evidence type="ECO:0000305" key="7"/>
<feature type="initiator methionine" description="Removed" evidence="2">
    <location>
        <position position="1"/>
    </location>
</feature>
<feature type="chain" id="PRO_0000266028" description="Phosducin-like protein">
    <location>
        <begin position="2"/>
        <end position="301"/>
    </location>
</feature>
<feature type="domain" description="Phosducin" evidence="5">
    <location>
        <begin position="37"/>
        <end position="299"/>
    </location>
</feature>
<feature type="region of interest" description="Disordered" evidence="6">
    <location>
        <begin position="15"/>
        <end position="53"/>
    </location>
</feature>
<feature type="region of interest" description="Thioredoxin fold" evidence="1">
    <location>
        <begin position="158"/>
        <end position="301"/>
    </location>
</feature>
<feature type="modified residue" description="N-acetylthreonine" evidence="2">
    <location>
        <position position="2"/>
    </location>
</feature>
<feature type="modified residue" description="Phosphoserine" evidence="3">
    <location>
        <position position="20"/>
    </location>
</feature>
<feature type="modified residue" description="Phosphoserine" evidence="4">
    <location>
        <position position="25"/>
    </location>
</feature>
<feature type="modified residue" description="Phosphoserine" evidence="2">
    <location>
        <position position="226"/>
    </location>
</feature>
<feature type="modified residue" description="Phosphoserine" evidence="2">
    <location>
        <position position="293"/>
    </location>
</feature>
<feature type="modified residue" description="Phosphoserine" evidence="2">
    <location>
        <position position="296"/>
    </location>
</feature>
<name>PHLP_BOVIN</name>
<accession>Q2HJA9</accession>
<keyword id="KW-0007">Acetylation</keyword>
<keyword id="KW-0966">Cell projection</keyword>
<keyword id="KW-0143">Chaperone</keyword>
<keyword id="KW-0970">Cilium biogenesis/degradation</keyword>
<keyword id="KW-0597">Phosphoprotein</keyword>
<keyword id="KW-1185">Reference proteome</keyword>
<keyword id="KW-0716">Sensory transduction</keyword>
<keyword id="KW-0844">Vision</keyword>
<sequence>MTTLDDKLLGEKLQYYYSSSEEEDSDHEDKDRGRGALAGSSMPADADLAGEGISVNTGPKGVINDWRRFKQLETEQREEQCREMERLIKKLSLSCRSHLDEEEEQRKQKDLQEKISGKMTLKDLAVMNEDQDDEEFLQQYRKQRMEEMRQQLYQGPQFKQVFEIPSGEGFLDMIDKEQRSTLIMVHIYEDGIPGTEAMNGCMLCLAAEYPAVKFCRVRSSVIGASSRFTRNALPALLIYKGGELIGNFVRVTDQLGEDFFAVDLEAFLQEFGLLPEKEVLLRTSVRNSATCHSEDSDLEID</sequence>
<gene>
    <name type="primary">PDCL</name>
</gene>
<organism>
    <name type="scientific">Bos taurus</name>
    <name type="common">Bovine</name>
    <dbReference type="NCBI Taxonomy" id="9913"/>
    <lineage>
        <taxon>Eukaryota</taxon>
        <taxon>Metazoa</taxon>
        <taxon>Chordata</taxon>
        <taxon>Craniata</taxon>
        <taxon>Vertebrata</taxon>
        <taxon>Euteleostomi</taxon>
        <taxon>Mammalia</taxon>
        <taxon>Eutheria</taxon>
        <taxon>Laurasiatheria</taxon>
        <taxon>Artiodactyla</taxon>
        <taxon>Ruminantia</taxon>
        <taxon>Pecora</taxon>
        <taxon>Bovidae</taxon>
        <taxon>Bovinae</taxon>
        <taxon>Bos</taxon>
    </lineage>
</organism>
<reference key="1">
    <citation type="submission" date="2006-02" db="EMBL/GenBank/DDBJ databases">
        <authorList>
            <consortium name="NIH - Mammalian Gene Collection (MGC) project"/>
        </authorList>
    </citation>
    <scope>NUCLEOTIDE SEQUENCE [LARGE SCALE MRNA]</scope>
    <source>
        <strain>Hereford</strain>
        <tissue>Uterus</tissue>
    </source>
</reference>